<proteinExistence type="predicted"/>
<feature type="chain" id="PRO_0000350799" description="Uncharacterized protein DDB_G0285291">
    <location>
        <begin position="1"/>
        <end position="412"/>
    </location>
</feature>
<feature type="region of interest" description="Disordered" evidence="1">
    <location>
        <begin position="150"/>
        <end position="171"/>
    </location>
</feature>
<feature type="region of interest" description="Disordered" evidence="1">
    <location>
        <begin position="177"/>
        <end position="196"/>
    </location>
</feature>
<feature type="region of interest" description="Disordered" evidence="1">
    <location>
        <begin position="302"/>
        <end position="412"/>
    </location>
</feature>
<feature type="compositionally biased region" description="Low complexity" evidence="1">
    <location>
        <begin position="156"/>
        <end position="168"/>
    </location>
</feature>
<feature type="compositionally biased region" description="Polar residues" evidence="1">
    <location>
        <begin position="177"/>
        <end position="187"/>
    </location>
</feature>
<feature type="compositionally biased region" description="Polar residues" evidence="1">
    <location>
        <begin position="310"/>
        <end position="321"/>
    </location>
</feature>
<feature type="compositionally biased region" description="Low complexity" evidence="1">
    <location>
        <begin position="335"/>
        <end position="345"/>
    </location>
</feature>
<feature type="compositionally biased region" description="Polar residues" evidence="1">
    <location>
        <begin position="350"/>
        <end position="363"/>
    </location>
</feature>
<feature type="compositionally biased region" description="Low complexity" evidence="1">
    <location>
        <begin position="364"/>
        <end position="373"/>
    </location>
</feature>
<feature type="compositionally biased region" description="Low complexity" evidence="1">
    <location>
        <begin position="381"/>
        <end position="394"/>
    </location>
</feature>
<keyword id="KW-1185">Reference proteome</keyword>
<gene>
    <name type="ORF">DDB_G0285291</name>
</gene>
<name>Y6434_DICDI</name>
<dbReference type="EMBL" id="AAFI02000077">
    <property type="protein sequence ID" value="EAL64809.1"/>
    <property type="molecule type" value="Genomic_DNA"/>
</dbReference>
<dbReference type="RefSeq" id="XP_638316.1">
    <property type="nucleotide sequence ID" value="XM_633224.1"/>
</dbReference>
<dbReference type="SMR" id="Q54NF3"/>
<dbReference type="PaxDb" id="44689-DDB0186434"/>
<dbReference type="EnsemblProtists" id="EAL64809">
    <property type="protein sequence ID" value="EAL64809"/>
    <property type="gene ID" value="DDB_G0285291"/>
</dbReference>
<dbReference type="GeneID" id="8625034"/>
<dbReference type="KEGG" id="ddi:DDB_G0285291"/>
<dbReference type="dictyBase" id="DDB_G0285291"/>
<dbReference type="VEuPathDB" id="AmoebaDB:DDB_G0285291"/>
<dbReference type="eggNOG" id="ENOG502QR8W">
    <property type="taxonomic scope" value="Eukaryota"/>
</dbReference>
<dbReference type="HOGENOM" id="CLU_668053_0_0_1"/>
<dbReference type="InParanoid" id="Q54NF3"/>
<dbReference type="OMA" id="DVAIHEY"/>
<dbReference type="PRO" id="PR:Q54NF3"/>
<dbReference type="Proteomes" id="UP000002195">
    <property type="component" value="Chromosome 4"/>
</dbReference>
<protein>
    <recommendedName>
        <fullName>Uncharacterized protein DDB_G0285291</fullName>
    </recommendedName>
</protein>
<organism>
    <name type="scientific">Dictyostelium discoideum</name>
    <name type="common">Social amoeba</name>
    <dbReference type="NCBI Taxonomy" id="44689"/>
    <lineage>
        <taxon>Eukaryota</taxon>
        <taxon>Amoebozoa</taxon>
        <taxon>Evosea</taxon>
        <taxon>Eumycetozoa</taxon>
        <taxon>Dictyostelia</taxon>
        <taxon>Dictyosteliales</taxon>
        <taxon>Dictyosteliaceae</taxon>
        <taxon>Dictyostelium</taxon>
    </lineage>
</organism>
<accession>Q54NF3</accession>
<evidence type="ECO:0000256" key="1">
    <source>
        <dbReference type="SAM" id="MobiDB-lite"/>
    </source>
</evidence>
<sequence length="412" mass="47410">MDDQLIDRSYFTTLYKQIRLQEFLEVAHTILQDRLENGFGKTVKGVPLGCLPVELFREHFSTFRYWRSYTKERPAFINNEKVMVQHLYFTFNARSGFPTLSSGKEWVKKKVEKKDSNNPADVAIHEYQKVTFIISIRDTRVECDFKMATNTPGSEQAQQQQQQQQQQQLGDIPIKQQITSSNNSGNSQQQQPQQQQQQQQQQQQQQQQPQQQQQQQQPQQQQHLQQQHQQQVQQLQQQQLQQQQLQQQQLQQQQLQQQQLQQPQLQQMQQPQQQQQQQQPQYTPQQLMQFQQMQQAQQQQQQAQQLQQQMGSSPTHSSPTIKQEGLTGYTQIPQGGIINTNTNLNGTGGVSPNQPMPNSSPILPTNASSVVPPVVSPPLPTSNNNSNNLGTTSPQQSNSSEISHQPIVPLNP</sequence>
<reference key="1">
    <citation type="journal article" date="2005" name="Nature">
        <title>The genome of the social amoeba Dictyostelium discoideum.</title>
        <authorList>
            <person name="Eichinger L."/>
            <person name="Pachebat J.A."/>
            <person name="Gloeckner G."/>
            <person name="Rajandream M.A."/>
            <person name="Sucgang R."/>
            <person name="Berriman M."/>
            <person name="Song J."/>
            <person name="Olsen R."/>
            <person name="Szafranski K."/>
            <person name="Xu Q."/>
            <person name="Tunggal B."/>
            <person name="Kummerfeld S."/>
            <person name="Madera M."/>
            <person name="Konfortov B.A."/>
            <person name="Rivero F."/>
            <person name="Bankier A.T."/>
            <person name="Lehmann R."/>
            <person name="Hamlin N."/>
            <person name="Davies R."/>
            <person name="Gaudet P."/>
            <person name="Fey P."/>
            <person name="Pilcher K."/>
            <person name="Chen G."/>
            <person name="Saunders D."/>
            <person name="Sodergren E.J."/>
            <person name="Davis P."/>
            <person name="Kerhornou A."/>
            <person name="Nie X."/>
            <person name="Hall N."/>
            <person name="Anjard C."/>
            <person name="Hemphill L."/>
            <person name="Bason N."/>
            <person name="Farbrother P."/>
            <person name="Desany B."/>
            <person name="Just E."/>
            <person name="Morio T."/>
            <person name="Rost R."/>
            <person name="Churcher C.M."/>
            <person name="Cooper J."/>
            <person name="Haydock S."/>
            <person name="van Driessche N."/>
            <person name="Cronin A."/>
            <person name="Goodhead I."/>
            <person name="Muzny D.M."/>
            <person name="Mourier T."/>
            <person name="Pain A."/>
            <person name="Lu M."/>
            <person name="Harper D."/>
            <person name="Lindsay R."/>
            <person name="Hauser H."/>
            <person name="James K.D."/>
            <person name="Quiles M."/>
            <person name="Madan Babu M."/>
            <person name="Saito T."/>
            <person name="Buchrieser C."/>
            <person name="Wardroper A."/>
            <person name="Felder M."/>
            <person name="Thangavelu M."/>
            <person name="Johnson D."/>
            <person name="Knights A."/>
            <person name="Loulseged H."/>
            <person name="Mungall K.L."/>
            <person name="Oliver K."/>
            <person name="Price C."/>
            <person name="Quail M.A."/>
            <person name="Urushihara H."/>
            <person name="Hernandez J."/>
            <person name="Rabbinowitsch E."/>
            <person name="Steffen D."/>
            <person name="Sanders M."/>
            <person name="Ma J."/>
            <person name="Kohara Y."/>
            <person name="Sharp S."/>
            <person name="Simmonds M.N."/>
            <person name="Spiegler S."/>
            <person name="Tivey A."/>
            <person name="Sugano S."/>
            <person name="White B."/>
            <person name="Walker D."/>
            <person name="Woodward J.R."/>
            <person name="Winckler T."/>
            <person name="Tanaka Y."/>
            <person name="Shaulsky G."/>
            <person name="Schleicher M."/>
            <person name="Weinstock G.M."/>
            <person name="Rosenthal A."/>
            <person name="Cox E.C."/>
            <person name="Chisholm R.L."/>
            <person name="Gibbs R.A."/>
            <person name="Loomis W.F."/>
            <person name="Platzer M."/>
            <person name="Kay R.R."/>
            <person name="Williams J.G."/>
            <person name="Dear P.H."/>
            <person name="Noegel A.A."/>
            <person name="Barrell B.G."/>
            <person name="Kuspa A."/>
        </authorList>
    </citation>
    <scope>NUCLEOTIDE SEQUENCE [LARGE SCALE GENOMIC DNA]</scope>
    <source>
        <strain>AX4</strain>
    </source>
</reference>